<keyword id="KW-0028">Amino-acid biosynthesis</keyword>
<keyword id="KW-0963">Cytoplasm</keyword>
<keyword id="KW-0368">Histidine biosynthesis</keyword>
<keyword id="KW-0456">Lyase</keyword>
<gene>
    <name evidence="1" type="primary">hisB</name>
    <name type="ordered locus">BURPS1106A_3722</name>
</gene>
<organism>
    <name type="scientific">Burkholderia pseudomallei (strain 1106a)</name>
    <dbReference type="NCBI Taxonomy" id="357348"/>
    <lineage>
        <taxon>Bacteria</taxon>
        <taxon>Pseudomonadati</taxon>
        <taxon>Pseudomonadota</taxon>
        <taxon>Betaproteobacteria</taxon>
        <taxon>Burkholderiales</taxon>
        <taxon>Burkholderiaceae</taxon>
        <taxon>Burkholderia</taxon>
        <taxon>pseudomallei group</taxon>
    </lineage>
</organism>
<dbReference type="EC" id="4.2.1.19" evidence="1"/>
<dbReference type="EMBL" id="CP000572">
    <property type="protein sequence ID" value="ABN92150.1"/>
    <property type="molecule type" value="Genomic_DNA"/>
</dbReference>
<dbReference type="RefSeq" id="WP_004199911.1">
    <property type="nucleotide sequence ID" value="NC_009076.1"/>
</dbReference>
<dbReference type="SMR" id="A3P031"/>
<dbReference type="GeneID" id="93061754"/>
<dbReference type="KEGG" id="bpl:BURPS1106A_3722"/>
<dbReference type="HOGENOM" id="CLU_044308_2_0_4"/>
<dbReference type="UniPathway" id="UPA00031">
    <property type="reaction ID" value="UER00011"/>
</dbReference>
<dbReference type="Proteomes" id="UP000006738">
    <property type="component" value="Chromosome I"/>
</dbReference>
<dbReference type="GO" id="GO:0005737">
    <property type="term" value="C:cytoplasm"/>
    <property type="evidence" value="ECO:0007669"/>
    <property type="project" value="UniProtKB-SubCell"/>
</dbReference>
<dbReference type="GO" id="GO:0004424">
    <property type="term" value="F:imidazoleglycerol-phosphate dehydratase activity"/>
    <property type="evidence" value="ECO:0007669"/>
    <property type="project" value="UniProtKB-UniRule"/>
</dbReference>
<dbReference type="GO" id="GO:0000105">
    <property type="term" value="P:L-histidine biosynthetic process"/>
    <property type="evidence" value="ECO:0007669"/>
    <property type="project" value="UniProtKB-UniRule"/>
</dbReference>
<dbReference type="CDD" id="cd07914">
    <property type="entry name" value="IGPD"/>
    <property type="match status" value="1"/>
</dbReference>
<dbReference type="FunFam" id="3.30.230.40:FF:000002">
    <property type="entry name" value="Imidazoleglycerol-phosphate dehydratase"/>
    <property type="match status" value="1"/>
</dbReference>
<dbReference type="FunFam" id="3.30.230.40:FF:000003">
    <property type="entry name" value="Imidazoleglycerol-phosphate dehydratase HisB"/>
    <property type="match status" value="1"/>
</dbReference>
<dbReference type="Gene3D" id="3.30.230.40">
    <property type="entry name" value="Imidazole glycerol phosphate dehydratase, domain 1"/>
    <property type="match status" value="2"/>
</dbReference>
<dbReference type="HAMAP" id="MF_00076">
    <property type="entry name" value="HisB"/>
    <property type="match status" value="1"/>
</dbReference>
<dbReference type="InterPro" id="IPR038494">
    <property type="entry name" value="IGPD_sf"/>
</dbReference>
<dbReference type="InterPro" id="IPR000807">
    <property type="entry name" value="ImidazoleglycerolP_deHydtase"/>
</dbReference>
<dbReference type="InterPro" id="IPR020565">
    <property type="entry name" value="ImidazoleglycerP_deHydtase_CS"/>
</dbReference>
<dbReference type="InterPro" id="IPR020568">
    <property type="entry name" value="Ribosomal_Su5_D2-typ_SF"/>
</dbReference>
<dbReference type="NCBIfam" id="NF002106">
    <property type="entry name" value="PRK00951.1-1"/>
    <property type="match status" value="1"/>
</dbReference>
<dbReference type="NCBIfam" id="NF002109">
    <property type="entry name" value="PRK00951.1-5"/>
    <property type="match status" value="1"/>
</dbReference>
<dbReference type="NCBIfam" id="NF002111">
    <property type="entry name" value="PRK00951.2-1"/>
    <property type="match status" value="1"/>
</dbReference>
<dbReference type="NCBIfam" id="NF002114">
    <property type="entry name" value="PRK00951.2-4"/>
    <property type="match status" value="1"/>
</dbReference>
<dbReference type="PANTHER" id="PTHR23133:SF2">
    <property type="entry name" value="IMIDAZOLEGLYCEROL-PHOSPHATE DEHYDRATASE"/>
    <property type="match status" value="1"/>
</dbReference>
<dbReference type="PANTHER" id="PTHR23133">
    <property type="entry name" value="IMIDAZOLEGLYCEROL-PHOSPHATE DEHYDRATASE HIS7"/>
    <property type="match status" value="1"/>
</dbReference>
<dbReference type="Pfam" id="PF00475">
    <property type="entry name" value="IGPD"/>
    <property type="match status" value="1"/>
</dbReference>
<dbReference type="SUPFAM" id="SSF54211">
    <property type="entry name" value="Ribosomal protein S5 domain 2-like"/>
    <property type="match status" value="2"/>
</dbReference>
<dbReference type="PROSITE" id="PS00954">
    <property type="entry name" value="IGP_DEHYDRATASE_1"/>
    <property type="match status" value="1"/>
</dbReference>
<dbReference type="PROSITE" id="PS00955">
    <property type="entry name" value="IGP_DEHYDRATASE_2"/>
    <property type="match status" value="1"/>
</dbReference>
<protein>
    <recommendedName>
        <fullName evidence="1">Imidazoleglycerol-phosphate dehydratase</fullName>
        <shortName evidence="1">IGPD</shortName>
        <ecNumber evidence="1">4.2.1.19</ecNumber>
    </recommendedName>
</protein>
<name>HIS7_BURP0</name>
<accession>A3P031</accession>
<reference key="1">
    <citation type="journal article" date="2010" name="Genome Biol. Evol.">
        <title>Continuing evolution of Burkholderia mallei through genome reduction and large-scale rearrangements.</title>
        <authorList>
            <person name="Losada L."/>
            <person name="Ronning C.M."/>
            <person name="DeShazer D."/>
            <person name="Woods D."/>
            <person name="Fedorova N."/>
            <person name="Kim H.S."/>
            <person name="Shabalina S.A."/>
            <person name="Pearson T.R."/>
            <person name="Brinkac L."/>
            <person name="Tan P."/>
            <person name="Nandi T."/>
            <person name="Crabtree J."/>
            <person name="Badger J."/>
            <person name="Beckstrom-Sternberg S."/>
            <person name="Saqib M."/>
            <person name="Schutzer S.E."/>
            <person name="Keim P."/>
            <person name="Nierman W.C."/>
        </authorList>
    </citation>
    <scope>NUCLEOTIDE SEQUENCE [LARGE SCALE GENOMIC DNA]</scope>
    <source>
        <strain>1106a</strain>
    </source>
</reference>
<proteinExistence type="inferred from homology"/>
<evidence type="ECO:0000255" key="1">
    <source>
        <dbReference type="HAMAP-Rule" id="MF_00076"/>
    </source>
</evidence>
<feature type="chain" id="PRO_1000010258" description="Imidazoleglycerol-phosphate dehydratase">
    <location>
        <begin position="1"/>
        <end position="195"/>
    </location>
</feature>
<sequence>MRVAQVVRNTSETQISVKIDLDGTGRQKLATGVPFLDHMLDQIARHGLVDLDIEAHGDTHIDDHHTVEDVGITLGQAVAKAVGDRKGIRRYGHSYVPLDEALSRVVIDFSGRPGLEFHVPFTRARIGTFDVDLSIEFFRGFVNHAGVTLHIDNLRGVNAHHQLETVFKAFGRALRMAVELDERAAGQIPSTKGSL</sequence>
<comment type="catalytic activity">
    <reaction evidence="1">
        <text>D-erythro-1-(imidazol-4-yl)glycerol 3-phosphate = 3-(imidazol-4-yl)-2-oxopropyl phosphate + H2O</text>
        <dbReference type="Rhea" id="RHEA:11040"/>
        <dbReference type="ChEBI" id="CHEBI:15377"/>
        <dbReference type="ChEBI" id="CHEBI:57766"/>
        <dbReference type="ChEBI" id="CHEBI:58278"/>
        <dbReference type="EC" id="4.2.1.19"/>
    </reaction>
</comment>
<comment type="pathway">
    <text evidence="1">Amino-acid biosynthesis; L-histidine biosynthesis; L-histidine from 5-phospho-alpha-D-ribose 1-diphosphate: step 6/9.</text>
</comment>
<comment type="subcellular location">
    <subcellularLocation>
        <location evidence="1">Cytoplasm</location>
    </subcellularLocation>
</comment>
<comment type="similarity">
    <text evidence="1">Belongs to the imidazoleglycerol-phosphate dehydratase family.</text>
</comment>